<reference key="1">
    <citation type="journal article" date="2004" name="Mol. Phylogenet. Evol.">
        <title>Phylogeny of Panax using chloroplast trnC-trnD intergenic region and the utility of trnC-trnD in interspecific studies of plants.</title>
        <authorList>
            <person name="Lee C."/>
            <person name="Wen J."/>
        </authorList>
    </citation>
    <scope>NUCLEOTIDE SEQUENCE [GENOMIC DNA]</scope>
</reference>
<evidence type="ECO:0000255" key="1">
    <source>
        <dbReference type="HAMAP-Rule" id="MF_00395"/>
    </source>
</evidence>
<proteinExistence type="inferred from homology"/>
<dbReference type="EMBL" id="AY275914">
    <property type="protein sequence ID" value="AAP34561.1"/>
    <property type="molecule type" value="Genomic_DNA"/>
</dbReference>
<dbReference type="RefSeq" id="YP_010600523.1">
    <property type="nucleotide sequence ID" value="NC_069842.1"/>
</dbReference>
<dbReference type="SMR" id="Q7GQG6"/>
<dbReference type="GeneID" id="77611769"/>
<dbReference type="GO" id="GO:0009535">
    <property type="term" value="C:chloroplast thylakoid membrane"/>
    <property type="evidence" value="ECO:0007669"/>
    <property type="project" value="UniProtKB-SubCell"/>
</dbReference>
<dbReference type="GO" id="GO:0009512">
    <property type="term" value="C:cytochrome b6f complex"/>
    <property type="evidence" value="ECO:0007669"/>
    <property type="project" value="InterPro"/>
</dbReference>
<dbReference type="GO" id="GO:0045158">
    <property type="term" value="F:electron transporter, transferring electrons within cytochrome b6/f complex of photosystem II activity"/>
    <property type="evidence" value="ECO:0007669"/>
    <property type="project" value="InterPro"/>
</dbReference>
<dbReference type="GO" id="GO:0017004">
    <property type="term" value="P:cytochrome complex assembly"/>
    <property type="evidence" value="ECO:0007669"/>
    <property type="project" value="UniProtKB-UniRule"/>
</dbReference>
<dbReference type="GO" id="GO:0015979">
    <property type="term" value="P:photosynthesis"/>
    <property type="evidence" value="ECO:0007669"/>
    <property type="project" value="UniProtKB-KW"/>
</dbReference>
<dbReference type="HAMAP" id="MF_00395">
    <property type="entry name" value="Cytb6_f_PetN"/>
    <property type="match status" value="1"/>
</dbReference>
<dbReference type="InterPro" id="IPR036143">
    <property type="entry name" value="Cytochr_b6-f_cplx_su8_sf"/>
</dbReference>
<dbReference type="InterPro" id="IPR005497">
    <property type="entry name" value="Cytochrome_b6-f_cplx_su8"/>
</dbReference>
<dbReference type="Pfam" id="PF03742">
    <property type="entry name" value="PetN"/>
    <property type="match status" value="1"/>
</dbReference>
<dbReference type="SUPFAM" id="SSF103451">
    <property type="entry name" value="PetN subunit of the cytochrome b6f complex"/>
    <property type="match status" value="1"/>
</dbReference>
<sequence>MDIVSLAWAALMVVFTFSLSLVVWGRSGL</sequence>
<name>PETN_ARAEL</name>
<organism>
    <name type="scientific">Aralia elata</name>
    <name type="common">Japanese angelica tree</name>
    <dbReference type="NCBI Taxonomy" id="82095"/>
    <lineage>
        <taxon>Eukaryota</taxon>
        <taxon>Viridiplantae</taxon>
        <taxon>Streptophyta</taxon>
        <taxon>Embryophyta</taxon>
        <taxon>Tracheophyta</taxon>
        <taxon>Spermatophyta</taxon>
        <taxon>Magnoliopsida</taxon>
        <taxon>eudicotyledons</taxon>
        <taxon>Gunneridae</taxon>
        <taxon>Pentapetalae</taxon>
        <taxon>asterids</taxon>
        <taxon>campanulids</taxon>
        <taxon>Apiales</taxon>
        <taxon>Araliaceae</taxon>
        <taxon>Aralia</taxon>
    </lineage>
</organism>
<feature type="chain" id="PRO_0000217099" description="Cytochrome b6-f complex subunit 8">
    <location>
        <begin position="1"/>
        <end position="29"/>
    </location>
</feature>
<feature type="transmembrane region" description="Helical" evidence="1">
    <location>
        <begin position="3"/>
        <end position="23"/>
    </location>
</feature>
<gene>
    <name evidence="1" type="primary">petN</name>
</gene>
<geneLocation type="chloroplast"/>
<accession>Q7GQG6</accession>
<protein>
    <recommendedName>
        <fullName evidence="1">Cytochrome b6-f complex subunit 8</fullName>
    </recommendedName>
    <alternativeName>
        <fullName evidence="1">Cytochrome b6-f complex subunit PetN</fullName>
    </alternativeName>
    <alternativeName>
        <fullName evidence="1">Cytochrome b6-f complex subunit VIII</fullName>
    </alternativeName>
</protein>
<comment type="function">
    <text evidence="1">Component of the cytochrome b6-f complex, which mediates electron transfer between photosystem II (PSII) and photosystem I (PSI), cyclic electron flow around PSI, and state transitions.</text>
</comment>
<comment type="subunit">
    <text evidence="1">The 4 large subunits of the cytochrome b6-f complex are cytochrome b6, subunit IV (17 kDa polypeptide, PetD), cytochrome f and the Rieske protein, while the 4 small subunits are PetG, PetL, PetM and PetN. The complex functions as a dimer.</text>
</comment>
<comment type="subcellular location">
    <subcellularLocation>
        <location evidence="1">Plastid</location>
        <location evidence="1">Chloroplast thylakoid membrane</location>
        <topology evidence="1">Single-pass membrane protein</topology>
    </subcellularLocation>
</comment>
<comment type="similarity">
    <text evidence="1">Belongs to the PetN family.</text>
</comment>
<keyword id="KW-0150">Chloroplast</keyword>
<keyword id="KW-0249">Electron transport</keyword>
<keyword id="KW-0472">Membrane</keyword>
<keyword id="KW-0602">Photosynthesis</keyword>
<keyword id="KW-0934">Plastid</keyword>
<keyword id="KW-0793">Thylakoid</keyword>
<keyword id="KW-0812">Transmembrane</keyword>
<keyword id="KW-1133">Transmembrane helix</keyword>
<keyword id="KW-0813">Transport</keyword>